<organism>
    <name type="scientific">Penicillium nalgiovense</name>
    <dbReference type="NCBI Taxonomy" id="60175"/>
    <lineage>
        <taxon>Eukaryota</taxon>
        <taxon>Fungi</taxon>
        <taxon>Dikarya</taxon>
        <taxon>Ascomycota</taxon>
        <taxon>Pezizomycotina</taxon>
        <taxon>Eurotiomycetes</taxon>
        <taxon>Eurotiomycetidae</taxon>
        <taxon>Eurotiales</taxon>
        <taxon>Aspergillaceae</taxon>
        <taxon>Penicillium</taxon>
    </lineage>
</organism>
<reference key="1">
    <citation type="journal article" date="2004" name="Int. J. Food Microbiol.">
        <title>High efficiency transformation of Penicillium nalgiovense with integrative and autonomously replicating plasmids.</title>
        <authorList>
            <person name="Fierro F."/>
            <person name="Laich F."/>
            <person name="Garcia-Rico R.O."/>
            <person name="Martin J.F."/>
        </authorList>
    </citation>
    <scope>NUCLEOTIDE SEQUENCE [GENOMIC DNA]</scope>
</reference>
<name>PYRF_PENNA</name>
<comment type="catalytic activity">
    <reaction evidence="2">
        <text>orotidine 5'-phosphate + H(+) = UMP + CO2</text>
        <dbReference type="Rhea" id="RHEA:11596"/>
        <dbReference type="ChEBI" id="CHEBI:15378"/>
        <dbReference type="ChEBI" id="CHEBI:16526"/>
        <dbReference type="ChEBI" id="CHEBI:57538"/>
        <dbReference type="ChEBI" id="CHEBI:57865"/>
        <dbReference type="EC" id="4.1.1.23"/>
    </reaction>
</comment>
<comment type="pathway">
    <text>Pyrimidine metabolism; UMP biosynthesis via de novo pathway; UMP from orotate: step 2/2.</text>
</comment>
<comment type="similarity">
    <text evidence="3">Belongs to the OMP decarboxylase family.</text>
</comment>
<proteinExistence type="inferred from homology"/>
<keyword id="KW-0210">Decarboxylase</keyword>
<keyword id="KW-0456">Lyase</keyword>
<keyword id="KW-0665">Pyrimidine biosynthesis</keyword>
<evidence type="ECO:0000250" key="1"/>
<evidence type="ECO:0000255" key="2">
    <source>
        <dbReference type="PROSITE-ProRule" id="PRU10110"/>
    </source>
</evidence>
<evidence type="ECO:0000305" key="3"/>
<sequence>MSSKSQLTYSARAQSHPNPLARKLFQVAEEKRSNVTVSADVTTTKELLDLADRLGPYIAVIKTHIDILSDFSQETIDGLNALAQKHNFLIFEDRKFIDIGNTVQKQYHNGTLRISEWAHIINCSILPGEGIVEALAQTAQATDFPYGSERGLLILAEMTSKGSLATGAYTSASVDIARKYPSFVLGFVSTRSLGEVESTEAPAQGEDFVVFTTGVNLSSKGDKLGQQYQTPQSAVGRGADFIISGRGIYAAADPVEAAKQYQQQGWEAYLARVGAQ</sequence>
<dbReference type="EC" id="4.1.1.23"/>
<dbReference type="EMBL" id="AF510725">
    <property type="protein sequence ID" value="AAN63821.1"/>
    <property type="molecule type" value="Genomic_DNA"/>
</dbReference>
<dbReference type="SMR" id="Q8J269"/>
<dbReference type="OMA" id="CLIKTHI"/>
<dbReference type="OrthoDB" id="10263753at2759"/>
<dbReference type="UniPathway" id="UPA00070">
    <property type="reaction ID" value="UER00120"/>
</dbReference>
<dbReference type="GO" id="GO:0005829">
    <property type="term" value="C:cytosol"/>
    <property type="evidence" value="ECO:0007669"/>
    <property type="project" value="TreeGrafter"/>
</dbReference>
<dbReference type="GO" id="GO:0004590">
    <property type="term" value="F:orotidine-5'-phosphate decarboxylase activity"/>
    <property type="evidence" value="ECO:0007669"/>
    <property type="project" value="UniProtKB-EC"/>
</dbReference>
<dbReference type="GO" id="GO:0006207">
    <property type="term" value="P:'de novo' pyrimidine nucleobase biosynthetic process"/>
    <property type="evidence" value="ECO:0007669"/>
    <property type="project" value="InterPro"/>
</dbReference>
<dbReference type="GO" id="GO:0044205">
    <property type="term" value="P:'de novo' UMP biosynthetic process"/>
    <property type="evidence" value="ECO:0007669"/>
    <property type="project" value="UniProtKB-UniPathway"/>
</dbReference>
<dbReference type="CDD" id="cd04725">
    <property type="entry name" value="OMP_decarboxylase_like"/>
    <property type="match status" value="1"/>
</dbReference>
<dbReference type="FunFam" id="3.20.20.70:FF:000114">
    <property type="entry name" value="Decarboxylase,orotidine phosphate"/>
    <property type="match status" value="1"/>
</dbReference>
<dbReference type="Gene3D" id="3.20.20.70">
    <property type="entry name" value="Aldolase class I"/>
    <property type="match status" value="1"/>
</dbReference>
<dbReference type="InterPro" id="IPR013785">
    <property type="entry name" value="Aldolase_TIM"/>
</dbReference>
<dbReference type="InterPro" id="IPR014732">
    <property type="entry name" value="OMPdecase"/>
</dbReference>
<dbReference type="InterPro" id="IPR018089">
    <property type="entry name" value="OMPdecase_AS"/>
</dbReference>
<dbReference type="InterPro" id="IPR001754">
    <property type="entry name" value="OMPdeCOase_dom"/>
</dbReference>
<dbReference type="InterPro" id="IPR011060">
    <property type="entry name" value="RibuloseP-bd_barrel"/>
</dbReference>
<dbReference type="NCBIfam" id="TIGR01740">
    <property type="entry name" value="pyrF"/>
    <property type="match status" value="1"/>
</dbReference>
<dbReference type="PANTHER" id="PTHR32119">
    <property type="entry name" value="OROTIDINE 5'-PHOSPHATE DECARBOXYLASE"/>
    <property type="match status" value="1"/>
</dbReference>
<dbReference type="PANTHER" id="PTHR32119:SF2">
    <property type="entry name" value="OROTIDINE 5'-PHOSPHATE DECARBOXYLASE"/>
    <property type="match status" value="1"/>
</dbReference>
<dbReference type="Pfam" id="PF00215">
    <property type="entry name" value="OMPdecase"/>
    <property type="match status" value="1"/>
</dbReference>
<dbReference type="SMART" id="SM00934">
    <property type="entry name" value="OMPdecase"/>
    <property type="match status" value="1"/>
</dbReference>
<dbReference type="SUPFAM" id="SSF51366">
    <property type="entry name" value="Ribulose-phoshate binding barrel"/>
    <property type="match status" value="1"/>
</dbReference>
<dbReference type="PROSITE" id="PS00156">
    <property type="entry name" value="OMPDECASE"/>
    <property type="match status" value="1"/>
</dbReference>
<accession>Q8J269</accession>
<gene>
    <name type="primary">pyrG</name>
</gene>
<feature type="chain" id="PRO_0000134670" description="Orotidine 5'-phosphate decarboxylase">
    <location>
        <begin position="1"/>
        <end position="276"/>
    </location>
</feature>
<feature type="active site" description="Proton donor" evidence="2">
    <location>
        <position position="95"/>
    </location>
</feature>
<feature type="binding site" evidence="1">
    <location>
        <position position="40"/>
    </location>
    <ligand>
        <name>substrate</name>
    </ligand>
</feature>
<feature type="binding site" evidence="1">
    <location>
        <begin position="62"/>
        <end position="64"/>
    </location>
    <ligand>
        <name>substrate</name>
    </ligand>
</feature>
<feature type="binding site" evidence="1">
    <location>
        <begin position="93"/>
        <end position="102"/>
    </location>
    <ligand>
        <name>substrate</name>
    </ligand>
</feature>
<feature type="binding site" evidence="1">
    <location>
        <position position="228"/>
    </location>
    <ligand>
        <name>substrate</name>
    </ligand>
</feature>
<feature type="binding site" evidence="1">
    <location>
        <position position="246"/>
    </location>
    <ligand>
        <name>substrate</name>
    </ligand>
</feature>
<protein>
    <recommendedName>
        <fullName>Orotidine 5'-phosphate decarboxylase</fullName>
        <ecNumber>4.1.1.23</ecNumber>
    </recommendedName>
    <alternativeName>
        <fullName>OMP decarboxylase</fullName>
        <shortName>OMPDCase</shortName>
        <shortName>OMPdecase</shortName>
    </alternativeName>
    <alternativeName>
        <fullName>Uridine 5'-monophosphate synthase</fullName>
        <shortName>UMP synthase</shortName>
    </alternativeName>
</protein>